<reference key="1">
    <citation type="journal article" date="2005" name="Science">
        <title>Life at depth: Photobacterium profundum genome sequence and expression analysis.</title>
        <authorList>
            <person name="Vezzi A."/>
            <person name="Campanaro S."/>
            <person name="D'Angelo M."/>
            <person name="Simonato F."/>
            <person name="Vitulo N."/>
            <person name="Lauro F.M."/>
            <person name="Cestaro A."/>
            <person name="Malacrida G."/>
            <person name="Simionati B."/>
            <person name="Cannata N."/>
            <person name="Romualdi C."/>
            <person name="Bartlett D.H."/>
            <person name="Valle G."/>
        </authorList>
    </citation>
    <scope>NUCLEOTIDE SEQUENCE [LARGE SCALE GENOMIC DNA]</scope>
    <source>
        <strain>ATCC BAA-1253 / SS9</strain>
    </source>
</reference>
<keyword id="KW-1185">Reference proteome</keyword>
<keyword id="KW-0687">Ribonucleoprotein</keyword>
<keyword id="KW-0689">Ribosomal protein</keyword>
<keyword id="KW-0694">RNA-binding</keyword>
<keyword id="KW-0699">rRNA-binding</keyword>
<keyword id="KW-0820">tRNA-binding</keyword>
<organism>
    <name type="scientific">Photobacterium profundum (strain SS9)</name>
    <dbReference type="NCBI Taxonomy" id="298386"/>
    <lineage>
        <taxon>Bacteria</taxon>
        <taxon>Pseudomonadati</taxon>
        <taxon>Pseudomonadota</taxon>
        <taxon>Gammaproteobacteria</taxon>
        <taxon>Vibrionales</taxon>
        <taxon>Vibrionaceae</taxon>
        <taxon>Photobacterium</taxon>
    </lineage>
</organism>
<feature type="chain" id="PRO_0000230541" description="Small ribosomal subunit protein uS13">
    <location>
        <begin position="1"/>
        <end position="118"/>
    </location>
</feature>
<feature type="region of interest" description="Disordered" evidence="2">
    <location>
        <begin position="94"/>
        <end position="118"/>
    </location>
</feature>
<dbReference type="EMBL" id="CR378663">
    <property type="protein sequence ID" value="CAG18781.1"/>
    <property type="molecule type" value="Genomic_DNA"/>
</dbReference>
<dbReference type="RefSeq" id="WP_011217145.1">
    <property type="nucleotide sequence ID" value="NC_006370.1"/>
</dbReference>
<dbReference type="SMR" id="Q6LV94"/>
<dbReference type="STRING" id="298386.PBPRA0342"/>
<dbReference type="KEGG" id="ppr:PBPRA0342"/>
<dbReference type="eggNOG" id="COG0099">
    <property type="taxonomic scope" value="Bacteria"/>
</dbReference>
<dbReference type="HOGENOM" id="CLU_103849_1_2_6"/>
<dbReference type="Proteomes" id="UP000000593">
    <property type="component" value="Chromosome 1"/>
</dbReference>
<dbReference type="GO" id="GO:0005829">
    <property type="term" value="C:cytosol"/>
    <property type="evidence" value="ECO:0007669"/>
    <property type="project" value="TreeGrafter"/>
</dbReference>
<dbReference type="GO" id="GO:0015935">
    <property type="term" value="C:small ribosomal subunit"/>
    <property type="evidence" value="ECO:0007669"/>
    <property type="project" value="TreeGrafter"/>
</dbReference>
<dbReference type="GO" id="GO:0019843">
    <property type="term" value="F:rRNA binding"/>
    <property type="evidence" value="ECO:0007669"/>
    <property type="project" value="UniProtKB-UniRule"/>
</dbReference>
<dbReference type="GO" id="GO:0003735">
    <property type="term" value="F:structural constituent of ribosome"/>
    <property type="evidence" value="ECO:0007669"/>
    <property type="project" value="InterPro"/>
</dbReference>
<dbReference type="GO" id="GO:0000049">
    <property type="term" value="F:tRNA binding"/>
    <property type="evidence" value="ECO:0007669"/>
    <property type="project" value="UniProtKB-UniRule"/>
</dbReference>
<dbReference type="GO" id="GO:0006412">
    <property type="term" value="P:translation"/>
    <property type="evidence" value="ECO:0007669"/>
    <property type="project" value="UniProtKB-UniRule"/>
</dbReference>
<dbReference type="FunFam" id="1.10.8.50:FF:000001">
    <property type="entry name" value="30S ribosomal protein S13"/>
    <property type="match status" value="1"/>
</dbReference>
<dbReference type="FunFam" id="4.10.910.10:FF:000001">
    <property type="entry name" value="30S ribosomal protein S13"/>
    <property type="match status" value="1"/>
</dbReference>
<dbReference type="Gene3D" id="1.10.8.50">
    <property type="match status" value="1"/>
</dbReference>
<dbReference type="Gene3D" id="4.10.910.10">
    <property type="entry name" value="30s ribosomal protein s13, domain 2"/>
    <property type="match status" value="1"/>
</dbReference>
<dbReference type="HAMAP" id="MF_01315">
    <property type="entry name" value="Ribosomal_uS13"/>
    <property type="match status" value="1"/>
</dbReference>
<dbReference type="InterPro" id="IPR027437">
    <property type="entry name" value="Rbsml_uS13_C"/>
</dbReference>
<dbReference type="InterPro" id="IPR001892">
    <property type="entry name" value="Ribosomal_uS13"/>
</dbReference>
<dbReference type="InterPro" id="IPR010979">
    <property type="entry name" value="Ribosomal_uS13-like_H2TH"/>
</dbReference>
<dbReference type="InterPro" id="IPR019980">
    <property type="entry name" value="Ribosomal_uS13_bac-type"/>
</dbReference>
<dbReference type="InterPro" id="IPR018269">
    <property type="entry name" value="Ribosomal_uS13_CS"/>
</dbReference>
<dbReference type="NCBIfam" id="TIGR03631">
    <property type="entry name" value="uS13_bact"/>
    <property type="match status" value="1"/>
</dbReference>
<dbReference type="PANTHER" id="PTHR10871">
    <property type="entry name" value="30S RIBOSOMAL PROTEIN S13/40S RIBOSOMAL PROTEIN S18"/>
    <property type="match status" value="1"/>
</dbReference>
<dbReference type="PANTHER" id="PTHR10871:SF1">
    <property type="entry name" value="SMALL RIBOSOMAL SUBUNIT PROTEIN US13M"/>
    <property type="match status" value="1"/>
</dbReference>
<dbReference type="Pfam" id="PF00416">
    <property type="entry name" value="Ribosomal_S13"/>
    <property type="match status" value="1"/>
</dbReference>
<dbReference type="PIRSF" id="PIRSF002134">
    <property type="entry name" value="Ribosomal_S13"/>
    <property type="match status" value="1"/>
</dbReference>
<dbReference type="SUPFAM" id="SSF46946">
    <property type="entry name" value="S13-like H2TH domain"/>
    <property type="match status" value="1"/>
</dbReference>
<dbReference type="PROSITE" id="PS00646">
    <property type="entry name" value="RIBOSOMAL_S13_1"/>
    <property type="match status" value="1"/>
</dbReference>
<dbReference type="PROSITE" id="PS50159">
    <property type="entry name" value="RIBOSOMAL_S13_2"/>
    <property type="match status" value="1"/>
</dbReference>
<protein>
    <recommendedName>
        <fullName evidence="1">Small ribosomal subunit protein uS13</fullName>
    </recommendedName>
    <alternativeName>
        <fullName evidence="3">30S ribosomal protein S13</fullName>
    </alternativeName>
</protein>
<sequence>MARIAGINIPDQKHSVIALTAIYGIGKTRSKAVLAEAGIAESVKISELSEEQIDLLREGVAKYTVEGDLRREVSMNIKRLMDLGCYRGIRHRRSLPLRGQRTKTNARTRKGPRKPIKR</sequence>
<proteinExistence type="inferred from homology"/>
<evidence type="ECO:0000255" key="1">
    <source>
        <dbReference type="HAMAP-Rule" id="MF_01315"/>
    </source>
</evidence>
<evidence type="ECO:0000256" key="2">
    <source>
        <dbReference type="SAM" id="MobiDB-lite"/>
    </source>
</evidence>
<evidence type="ECO:0000305" key="3"/>
<gene>
    <name evidence="1" type="primary">rpsM</name>
    <name type="ordered locus">PBPRA0342</name>
</gene>
<accession>Q6LV94</accession>
<name>RS13_PHOPR</name>
<comment type="function">
    <text evidence="1">Located at the top of the head of the 30S subunit, it contacts several helices of the 16S rRNA. In the 70S ribosome it contacts the 23S rRNA (bridge B1a) and protein L5 of the 50S subunit (bridge B1b), connecting the 2 subunits; these bridges are implicated in subunit movement. Contacts the tRNAs in the A and P-sites.</text>
</comment>
<comment type="subunit">
    <text evidence="1">Part of the 30S ribosomal subunit. Forms a loose heterodimer with protein S19. Forms two bridges to the 50S subunit in the 70S ribosome.</text>
</comment>
<comment type="similarity">
    <text evidence="1">Belongs to the universal ribosomal protein uS13 family.</text>
</comment>